<accession>P0C0T8</accession>
<accession>Q93TJ3</accession>
<accession>Q9S0S8</accession>
<gene>
    <name type="primary">cpsC</name>
    <name type="synonym">cpsIaC</name>
</gene>
<sequence length="230" mass="25213">MNKIANTEVEINIFNLLKKLWKKKFLITFVAIAFATAGLFYSLFIVTPQYTSSTRIYVINPNTPNNSITAQDLQAGSFLANDYKEIITSTDVLEKVISSEKLNYPSSQLLQKITVSILKDTRVISISVEDANPKMSQKLANSVREAAVSKIKAVTQVEDITTLEKGNLPKAPSSPNIKKNVLIGFIVGAGLSTIVLVIMGILDDRVNTEEDIEKVLGLTSLGIVPDLNKL</sequence>
<comment type="function">
    <text evidence="1">Required for CpsD phosphorylation (By similarity). Involved in the regulation of capsular polysaccharide biosynthesis. May be part of a complex that directs the coordinated polymerization and export to the cell surface of the capsular polysaccharide (By similarity).</text>
</comment>
<comment type="pathway">
    <text>Capsule biogenesis; capsule polysaccharide biosynthesis.</text>
</comment>
<comment type="subcellular location">
    <subcellularLocation>
        <location evidence="3">Cell membrane</location>
        <topology evidence="3">Multi-pass membrane protein</topology>
    </subcellularLocation>
</comment>
<comment type="similarity">
    <text evidence="3">Belongs to the CpsC/CapA family.</text>
</comment>
<feature type="chain" id="PRO_0000217228" description="Capsular polysaccharide biosynthesis protein CpsC">
    <location>
        <begin position="1"/>
        <end position="230"/>
    </location>
</feature>
<feature type="transmembrane region" description="Helical" evidence="2">
    <location>
        <begin position="25"/>
        <end position="45"/>
    </location>
</feature>
<feature type="transmembrane region" description="Helical" evidence="2">
    <location>
        <begin position="181"/>
        <end position="201"/>
    </location>
</feature>
<feature type="sequence variant" description="In strain: CNTC 1/82.">
    <original>V</original>
    <variation>I</variation>
    <location>
        <position position="115"/>
    </location>
</feature>
<reference key="1">
    <citation type="submission" date="2001-01" db="EMBL/GenBank/DDBJ databases">
        <authorList>
            <person name="McKinnon K."/>
            <person name="Chaffin D.O."/>
            <person name="Rubens C.E."/>
        </authorList>
    </citation>
    <scope>NUCLEOTIDE SEQUENCE [GENOMIC DNA]</scope>
    <source>
        <strain>NT6 / Serotype VI</strain>
    </source>
</reference>
<reference key="2">
    <citation type="submission" date="2001-03" db="EMBL/GenBank/DDBJ databases">
        <authorList>
            <person name="McKinnon K."/>
            <person name="Chaffin D.O."/>
            <person name="Rubens C.E."/>
        </authorList>
    </citation>
    <scope>NUCLEOTIDE SEQUENCE [GENOMIC DNA]</scope>
    <source>
        <strain>ATCC 49446 / 3139 / CNCTC 1/82 / Serotype IV</strain>
    </source>
</reference>
<protein>
    <recommendedName>
        <fullName>Capsular polysaccharide biosynthesis protein CpsC</fullName>
    </recommendedName>
</protein>
<organism>
    <name type="scientific">Streptococcus agalactiae</name>
    <dbReference type="NCBI Taxonomy" id="1311"/>
    <lineage>
        <taxon>Bacteria</taxon>
        <taxon>Bacillati</taxon>
        <taxon>Bacillota</taxon>
        <taxon>Bacilli</taxon>
        <taxon>Lactobacillales</taxon>
        <taxon>Streptococcaceae</taxon>
        <taxon>Streptococcus</taxon>
    </lineage>
</organism>
<keyword id="KW-0972">Capsule biogenesis/degradation</keyword>
<keyword id="KW-1003">Cell membrane</keyword>
<keyword id="KW-0270">Exopolysaccharide synthesis</keyword>
<keyword id="KW-0472">Membrane</keyword>
<keyword id="KW-0812">Transmembrane</keyword>
<keyword id="KW-1133">Transmembrane helix</keyword>
<dbReference type="EMBL" id="AF337958">
    <property type="protein sequence ID" value="AAK11660.1"/>
    <property type="molecule type" value="Genomic_DNA"/>
</dbReference>
<dbReference type="EMBL" id="AF355776">
    <property type="protein sequence ID" value="AAK43604.1"/>
    <property type="molecule type" value="Genomic_DNA"/>
</dbReference>
<dbReference type="RefSeq" id="WP_001033068.1">
    <property type="nucleotide sequence ID" value="NZ_VSKR01000007.1"/>
</dbReference>
<dbReference type="RefSeq" id="WP_001033073.1">
    <property type="nucleotide sequence ID" value="NZ_WNJK01000002.1"/>
</dbReference>
<dbReference type="SMR" id="P0C0T8"/>
<dbReference type="UniPathway" id="UPA00934"/>
<dbReference type="GO" id="GO:0005886">
    <property type="term" value="C:plasma membrane"/>
    <property type="evidence" value="ECO:0007669"/>
    <property type="project" value="UniProtKB-SubCell"/>
</dbReference>
<dbReference type="GO" id="GO:0004713">
    <property type="term" value="F:protein tyrosine kinase activity"/>
    <property type="evidence" value="ECO:0007669"/>
    <property type="project" value="TreeGrafter"/>
</dbReference>
<dbReference type="GO" id="GO:0045227">
    <property type="term" value="P:capsule polysaccharide biosynthetic process"/>
    <property type="evidence" value="ECO:0007669"/>
    <property type="project" value="UniProtKB-UniPathway"/>
</dbReference>
<dbReference type="InterPro" id="IPR050445">
    <property type="entry name" value="Bact_polysacc_biosynth/exp"/>
</dbReference>
<dbReference type="InterPro" id="IPR003856">
    <property type="entry name" value="LPS_length_determ_N_term"/>
</dbReference>
<dbReference type="PANTHER" id="PTHR32309:SF13">
    <property type="entry name" value="FERRIC ENTEROBACTIN TRANSPORT PROTEIN FEPE"/>
    <property type="match status" value="1"/>
</dbReference>
<dbReference type="PANTHER" id="PTHR32309">
    <property type="entry name" value="TYROSINE-PROTEIN KINASE"/>
    <property type="match status" value="1"/>
</dbReference>
<dbReference type="Pfam" id="PF02706">
    <property type="entry name" value="Wzz"/>
    <property type="match status" value="1"/>
</dbReference>
<proteinExistence type="inferred from homology"/>
<name>CPSC_STRAG</name>
<evidence type="ECO:0000250" key="1"/>
<evidence type="ECO:0000255" key="2"/>
<evidence type="ECO:0000305" key="3"/>